<accession>Q4ZUH3</accession>
<protein>
    <recommendedName>
        <fullName evidence="1">D-ribose pyranase</fullName>
        <ecNumber evidence="1">5.4.99.62</ecNumber>
    </recommendedName>
</protein>
<proteinExistence type="inferred from homology"/>
<organism>
    <name type="scientific">Pseudomonas syringae pv. syringae (strain B728a)</name>
    <dbReference type="NCBI Taxonomy" id="205918"/>
    <lineage>
        <taxon>Bacteria</taxon>
        <taxon>Pseudomonadati</taxon>
        <taxon>Pseudomonadota</taxon>
        <taxon>Gammaproteobacteria</taxon>
        <taxon>Pseudomonadales</taxon>
        <taxon>Pseudomonadaceae</taxon>
        <taxon>Pseudomonas</taxon>
        <taxon>Pseudomonas syringae</taxon>
    </lineage>
</organism>
<name>RBSD_PSEU2</name>
<sequence>MKKTPLLNIALSRVIASLGHGDILMIVDAGMPVPAGVELIDLALTRGVPDFISVLDVVLSEMQVESHVLANEMAEVKPPALQVIESLNLEDQLGQQRWISHEDLKVLSRKAKAIIRTGECQPYSNVALVSGVVF</sequence>
<gene>
    <name evidence="1" type="primary">rbsD</name>
    <name type="ordered locus">Psyr_2156</name>
</gene>
<evidence type="ECO:0000255" key="1">
    <source>
        <dbReference type="HAMAP-Rule" id="MF_01661"/>
    </source>
</evidence>
<reference key="1">
    <citation type="journal article" date="2005" name="Proc. Natl. Acad. Sci. U.S.A.">
        <title>Comparison of the complete genome sequences of Pseudomonas syringae pv. syringae B728a and pv. tomato DC3000.</title>
        <authorList>
            <person name="Feil H."/>
            <person name="Feil W.S."/>
            <person name="Chain P."/>
            <person name="Larimer F."/>
            <person name="Dibartolo G."/>
            <person name="Copeland A."/>
            <person name="Lykidis A."/>
            <person name="Trong S."/>
            <person name="Nolan M."/>
            <person name="Goltsman E."/>
            <person name="Thiel J."/>
            <person name="Malfatti S."/>
            <person name="Loper J.E."/>
            <person name="Lapidus A."/>
            <person name="Detter J.C."/>
            <person name="Land M."/>
            <person name="Richardson P.M."/>
            <person name="Kyrpides N.C."/>
            <person name="Ivanova N."/>
            <person name="Lindow S.E."/>
        </authorList>
    </citation>
    <scope>NUCLEOTIDE SEQUENCE [LARGE SCALE GENOMIC DNA]</scope>
    <source>
        <strain>B728a</strain>
    </source>
</reference>
<comment type="function">
    <text evidence="1">Catalyzes the interconversion of beta-pyran and beta-furan forms of D-ribose.</text>
</comment>
<comment type="catalytic activity">
    <reaction evidence="1">
        <text>beta-D-ribopyranose = beta-D-ribofuranose</text>
        <dbReference type="Rhea" id="RHEA:25432"/>
        <dbReference type="ChEBI" id="CHEBI:27476"/>
        <dbReference type="ChEBI" id="CHEBI:47002"/>
        <dbReference type="EC" id="5.4.99.62"/>
    </reaction>
</comment>
<comment type="pathway">
    <text evidence="1">Carbohydrate metabolism; D-ribose degradation; D-ribose 5-phosphate from beta-D-ribopyranose: step 1/2.</text>
</comment>
<comment type="subunit">
    <text evidence="1">Homodecamer.</text>
</comment>
<comment type="subcellular location">
    <subcellularLocation>
        <location evidence="1">Cytoplasm</location>
    </subcellularLocation>
</comment>
<comment type="similarity">
    <text evidence="1">Belongs to the RbsD / FucU family. RbsD subfamily.</text>
</comment>
<feature type="chain" id="PRO_0000346242" description="D-ribose pyranase">
    <location>
        <begin position="1"/>
        <end position="134"/>
    </location>
</feature>
<feature type="active site" description="Proton donor" evidence="1">
    <location>
        <position position="20"/>
    </location>
</feature>
<feature type="binding site" evidence="1">
    <location>
        <position position="28"/>
    </location>
    <ligand>
        <name>substrate</name>
    </ligand>
</feature>
<feature type="binding site" evidence="1">
    <location>
        <position position="101"/>
    </location>
    <ligand>
        <name>substrate</name>
    </ligand>
</feature>
<feature type="binding site" evidence="1">
    <location>
        <begin position="123"/>
        <end position="125"/>
    </location>
    <ligand>
        <name>substrate</name>
    </ligand>
</feature>
<keyword id="KW-0119">Carbohydrate metabolism</keyword>
<keyword id="KW-0963">Cytoplasm</keyword>
<keyword id="KW-0413">Isomerase</keyword>
<dbReference type="EC" id="5.4.99.62" evidence="1"/>
<dbReference type="EMBL" id="CP000075">
    <property type="protein sequence ID" value="AAY37199.1"/>
    <property type="molecule type" value="Genomic_DNA"/>
</dbReference>
<dbReference type="RefSeq" id="WP_011267465.1">
    <property type="nucleotide sequence ID" value="NC_007005.1"/>
</dbReference>
<dbReference type="RefSeq" id="YP_235237.1">
    <property type="nucleotide sequence ID" value="NC_007005.1"/>
</dbReference>
<dbReference type="SMR" id="Q4ZUH3"/>
<dbReference type="STRING" id="205918.Psyr_2156"/>
<dbReference type="KEGG" id="psb:Psyr_2156"/>
<dbReference type="PATRIC" id="fig|205918.7.peg.2206"/>
<dbReference type="eggNOG" id="COG1869">
    <property type="taxonomic scope" value="Bacteria"/>
</dbReference>
<dbReference type="HOGENOM" id="CLU_135498_0_0_6"/>
<dbReference type="OrthoDB" id="9805009at2"/>
<dbReference type="UniPathway" id="UPA00916">
    <property type="reaction ID" value="UER00888"/>
</dbReference>
<dbReference type="Proteomes" id="UP000000426">
    <property type="component" value="Chromosome"/>
</dbReference>
<dbReference type="GO" id="GO:0005829">
    <property type="term" value="C:cytosol"/>
    <property type="evidence" value="ECO:0007669"/>
    <property type="project" value="TreeGrafter"/>
</dbReference>
<dbReference type="GO" id="GO:0062193">
    <property type="term" value="F:D-ribose pyranase activity"/>
    <property type="evidence" value="ECO:0007669"/>
    <property type="project" value="UniProtKB-EC"/>
</dbReference>
<dbReference type="GO" id="GO:0016872">
    <property type="term" value="F:intramolecular lyase activity"/>
    <property type="evidence" value="ECO:0007669"/>
    <property type="project" value="UniProtKB-UniRule"/>
</dbReference>
<dbReference type="GO" id="GO:0048029">
    <property type="term" value="F:monosaccharide binding"/>
    <property type="evidence" value="ECO:0007669"/>
    <property type="project" value="InterPro"/>
</dbReference>
<dbReference type="GO" id="GO:0019303">
    <property type="term" value="P:D-ribose catabolic process"/>
    <property type="evidence" value="ECO:0007669"/>
    <property type="project" value="UniProtKB-UniRule"/>
</dbReference>
<dbReference type="FunFam" id="3.40.1650.10:FF:000004">
    <property type="entry name" value="D-ribose pyranase"/>
    <property type="match status" value="1"/>
</dbReference>
<dbReference type="Gene3D" id="3.40.1650.10">
    <property type="entry name" value="RbsD-like domain"/>
    <property type="match status" value="1"/>
</dbReference>
<dbReference type="HAMAP" id="MF_01661">
    <property type="entry name" value="D_rib_pyranase"/>
    <property type="match status" value="1"/>
</dbReference>
<dbReference type="InterPro" id="IPR023064">
    <property type="entry name" value="D-ribose_pyranase"/>
</dbReference>
<dbReference type="InterPro" id="IPR023750">
    <property type="entry name" value="RbsD-like_sf"/>
</dbReference>
<dbReference type="InterPro" id="IPR007721">
    <property type="entry name" value="RbsD_FucU"/>
</dbReference>
<dbReference type="NCBIfam" id="NF008761">
    <property type="entry name" value="PRK11797.1"/>
    <property type="match status" value="1"/>
</dbReference>
<dbReference type="PANTHER" id="PTHR37831">
    <property type="entry name" value="D-RIBOSE PYRANASE"/>
    <property type="match status" value="1"/>
</dbReference>
<dbReference type="PANTHER" id="PTHR37831:SF1">
    <property type="entry name" value="D-RIBOSE PYRANASE"/>
    <property type="match status" value="1"/>
</dbReference>
<dbReference type="Pfam" id="PF05025">
    <property type="entry name" value="RbsD_FucU"/>
    <property type="match status" value="1"/>
</dbReference>
<dbReference type="SUPFAM" id="SSF102546">
    <property type="entry name" value="RbsD-like"/>
    <property type="match status" value="1"/>
</dbReference>